<gene>
    <name evidence="1" type="primary">rpl33</name>
</gene>
<reference key="1">
    <citation type="journal article" date="2006" name="BMC Plant Biol.">
        <title>The complete chloroplast genome sequence of Citrus sinensis (L.) Osbeck var 'Ridge Pineapple': organization and phylogenetic relationships to other angiosperms.</title>
        <authorList>
            <person name="Bausher M.G."/>
            <person name="Singh N.D."/>
            <person name="Lee S.-B."/>
            <person name="Jansen R.K."/>
            <person name="Daniell H."/>
        </authorList>
    </citation>
    <scope>NUCLEOTIDE SEQUENCE [LARGE SCALE GENOMIC DNA]</scope>
    <source>
        <strain>cv. Osbeck var. Ridge Pineapple</strain>
    </source>
</reference>
<feature type="chain" id="PRO_0000276496" description="Large ribosomal subunit protein bL33c">
    <location>
        <begin position="1"/>
        <end position="66"/>
    </location>
</feature>
<comment type="subcellular location">
    <subcellularLocation>
        <location>Plastid</location>
        <location>Chloroplast</location>
    </subcellularLocation>
</comment>
<comment type="similarity">
    <text evidence="1">Belongs to the bacterial ribosomal protein bL33 family.</text>
</comment>
<organism>
    <name type="scientific">Citrus sinensis</name>
    <name type="common">Sweet orange</name>
    <name type="synonym">Citrus aurantium var. sinensis</name>
    <dbReference type="NCBI Taxonomy" id="2711"/>
    <lineage>
        <taxon>Eukaryota</taxon>
        <taxon>Viridiplantae</taxon>
        <taxon>Streptophyta</taxon>
        <taxon>Embryophyta</taxon>
        <taxon>Tracheophyta</taxon>
        <taxon>Spermatophyta</taxon>
        <taxon>Magnoliopsida</taxon>
        <taxon>eudicotyledons</taxon>
        <taxon>Gunneridae</taxon>
        <taxon>Pentapetalae</taxon>
        <taxon>rosids</taxon>
        <taxon>malvids</taxon>
        <taxon>Sapindales</taxon>
        <taxon>Rutaceae</taxon>
        <taxon>Aurantioideae</taxon>
        <taxon>Citrus</taxon>
    </lineage>
</organism>
<dbReference type="EMBL" id="DQ864733">
    <property type="protein sequence ID" value="ABI49041.1"/>
    <property type="molecule type" value="Genomic_DNA"/>
</dbReference>
<dbReference type="RefSeq" id="YP_740496.1">
    <property type="nucleotide sequence ID" value="NC_008334.1"/>
</dbReference>
<dbReference type="GeneID" id="4271121"/>
<dbReference type="KEGG" id="cit:4271121"/>
<dbReference type="OrthoDB" id="53059at71240"/>
<dbReference type="GO" id="GO:0009507">
    <property type="term" value="C:chloroplast"/>
    <property type="evidence" value="ECO:0007669"/>
    <property type="project" value="UniProtKB-SubCell"/>
</dbReference>
<dbReference type="GO" id="GO:1990904">
    <property type="term" value="C:ribonucleoprotein complex"/>
    <property type="evidence" value="ECO:0007669"/>
    <property type="project" value="UniProtKB-KW"/>
</dbReference>
<dbReference type="GO" id="GO:0005840">
    <property type="term" value="C:ribosome"/>
    <property type="evidence" value="ECO:0007669"/>
    <property type="project" value="UniProtKB-KW"/>
</dbReference>
<dbReference type="GO" id="GO:0003735">
    <property type="term" value="F:structural constituent of ribosome"/>
    <property type="evidence" value="ECO:0007669"/>
    <property type="project" value="InterPro"/>
</dbReference>
<dbReference type="GO" id="GO:0006412">
    <property type="term" value="P:translation"/>
    <property type="evidence" value="ECO:0007669"/>
    <property type="project" value="UniProtKB-UniRule"/>
</dbReference>
<dbReference type="Gene3D" id="2.20.28.120">
    <property type="entry name" value="Ribosomal protein L33"/>
    <property type="match status" value="1"/>
</dbReference>
<dbReference type="HAMAP" id="MF_00294">
    <property type="entry name" value="Ribosomal_bL33"/>
    <property type="match status" value="1"/>
</dbReference>
<dbReference type="InterPro" id="IPR001705">
    <property type="entry name" value="Ribosomal_bL33"/>
</dbReference>
<dbReference type="InterPro" id="IPR018264">
    <property type="entry name" value="Ribosomal_bL33_CS"/>
</dbReference>
<dbReference type="InterPro" id="IPR038584">
    <property type="entry name" value="Ribosomal_bL33_sf"/>
</dbReference>
<dbReference type="InterPro" id="IPR011332">
    <property type="entry name" value="Ribosomal_zn-bd"/>
</dbReference>
<dbReference type="NCBIfam" id="NF001764">
    <property type="entry name" value="PRK00504.1"/>
    <property type="match status" value="1"/>
</dbReference>
<dbReference type="NCBIfam" id="NF001860">
    <property type="entry name" value="PRK00595.1"/>
    <property type="match status" value="1"/>
</dbReference>
<dbReference type="NCBIfam" id="TIGR01023">
    <property type="entry name" value="rpmG_bact"/>
    <property type="match status" value="1"/>
</dbReference>
<dbReference type="PANTHER" id="PTHR43168">
    <property type="entry name" value="50S RIBOSOMAL PROTEIN L33, CHLOROPLASTIC"/>
    <property type="match status" value="1"/>
</dbReference>
<dbReference type="PANTHER" id="PTHR43168:SF2">
    <property type="entry name" value="LARGE RIBOSOMAL SUBUNIT PROTEIN BL33C"/>
    <property type="match status" value="1"/>
</dbReference>
<dbReference type="Pfam" id="PF00471">
    <property type="entry name" value="Ribosomal_L33"/>
    <property type="match status" value="1"/>
</dbReference>
<dbReference type="SUPFAM" id="SSF57829">
    <property type="entry name" value="Zn-binding ribosomal proteins"/>
    <property type="match status" value="1"/>
</dbReference>
<dbReference type="PROSITE" id="PS00582">
    <property type="entry name" value="RIBOSOMAL_L33"/>
    <property type="match status" value="1"/>
</dbReference>
<accession>Q09MF7</accession>
<name>RK33_CITSI</name>
<protein>
    <recommendedName>
        <fullName evidence="1">Large ribosomal subunit protein bL33c</fullName>
    </recommendedName>
    <alternativeName>
        <fullName evidence="2">50S ribosomal protein L33, chloroplastic</fullName>
    </alternativeName>
</protein>
<sequence length="66" mass="7762">MAKGKEVRVRVILECTSCVRNGVNKESRGISRYITQKNRHNTPSRLELRKFCPYCYKHTLHGEIKK</sequence>
<geneLocation type="chloroplast"/>
<evidence type="ECO:0000255" key="1">
    <source>
        <dbReference type="HAMAP-Rule" id="MF_00294"/>
    </source>
</evidence>
<evidence type="ECO:0000305" key="2"/>
<proteinExistence type="inferred from homology"/>
<keyword id="KW-0150">Chloroplast</keyword>
<keyword id="KW-0934">Plastid</keyword>
<keyword id="KW-0687">Ribonucleoprotein</keyword>
<keyword id="KW-0689">Ribosomal protein</keyword>